<comment type="function">
    <molecule>Envelope glycoprotein gp160</molecule>
    <text evidence="1">Oligomerizes in the host endoplasmic reticulum into predominantly trimers. In a second time, gp160 transits in the host Golgi, where glycosylation is completed. The precursor is then proteolytically cleaved in the trans-Golgi and thereby activated by cellular furin or furin-like proteases to produce gp120 and gp41.</text>
</comment>
<comment type="function">
    <molecule>Surface protein gp120</molecule>
    <text evidence="1">Attaches the virus to the host lymphoid cell by binding to the primary receptor CD4. This interaction induces a structural rearrangement creating a high affinity binding site for a chemokine coreceptor like CXCR4 and/or CCR5. Acts as a ligand for CD209/DC-SIGN and CLEC4M/DC-SIGNR, which are respectively found on dendritic cells (DCs), and on endothelial cells of liver sinusoids and lymph node sinuses. These interactions allow capture of viral particles at mucosal surfaces by these cells and subsequent transmission to permissive cells. HIV subverts the migration properties of dendritic cells to gain access to CD4+ T-cells in lymph nodes. Virus transmission to permissive T-cells occurs either in trans (without DCs infection, through viral capture and transmission), or in cis (following DCs productive infection, through the usual CD4-gp120 interaction), thereby inducing a robust infection. In trans infection, bound virions remain infectious over days and it is proposed that they are not degraded, but protected in non-lysosomal acidic organelles within the DCs close to the cell membrane thus contributing to the viral infectious potential during DCs' migration from the periphery to the lymphoid tissues. On arrival at lymphoid tissues, intact virions recycle back to DCs' cell surface allowing virus transmission to CD4+ T-cells.</text>
</comment>
<comment type="function">
    <molecule>Transmembrane protein gp41</molecule>
    <text evidence="1">Acts as a class I viral fusion protein. Under the current model, the protein has at least 3 conformational states: pre-fusion native state, pre-hairpin intermediate state, and post-fusion hairpin state. During fusion of viral and target intracellular membranes, the coiled coil regions (heptad repeats) assume a trimer-of-hairpins structure, positioning the fusion peptide in close proximity to the C-terminal region of the ectodomain. The formation of this structure appears to drive apposition and subsequent fusion of viral and target cell membranes. Complete fusion occurs in host cell endosomes and is dynamin-dependent, however some lipid transfer might occur at the plasma membrane. The virus undergoes clathrin-dependent internalization long before endosomal fusion, thus minimizing the surface exposure of conserved viral epitopes during fusion and reducing the efficacy of inhibitors targeting these epitopes. Membranes fusion leads to delivery of the nucleocapsid into the cytoplasm.</text>
</comment>
<comment type="subunit">
    <molecule>Surface protein gp120</molecule>
    <text evidence="1 3 4 6 9">The mature envelope protein (Env) consists of a homotrimer of non-covalently associated gp120-gp41 heterodimers. The resulting complex protrudes from the virus surface as a spike. There seems to be as few as 10 spikes on the average virion. Interacts with host CD4, CCR5 and CXCR4. Gp120 also interacts with the C-type lectins CD209/DC-SIGN and CLEC4M/DC-SIGNR (collectively referred to as DC-SIGN(R)). Gp120 and gp41 interact with GalCer. Gp120 interacts with host ITGA4/ITGB7 complex; on CD4+ T-cells, this interaction results in rapid activation of integrin ITGAL/LFA-1, which facilitates efficient cell-to-cell spreading of HIV-1. Gp120 interacts with cell-associated heparan sulfate; this interaction increases virus infectivity on permissive cells and may be involved in infection of CD4- cells.</text>
</comment>
<comment type="subunit">
    <molecule>Transmembrane protein gp41</molecule>
    <text evidence="1 3 4 6 9">The mature envelope protein (Env) consists of a homotrimer of non-covalently associated gp120-gp41 heterodimers. The resulting complex protrudes from the virus surface as a spike. There seems to be as few as 10 spikes on the average virion.</text>
</comment>
<comment type="subcellular location">
    <molecule>Surface protein gp120</molecule>
    <subcellularLocation>
        <location evidence="1">Virion membrane</location>
        <topology evidence="1">Peripheral membrane protein</topology>
    </subcellularLocation>
    <subcellularLocation>
        <location evidence="1">Host cell membrane</location>
        <topology evidence="1">Peripheral membrane protein</topology>
    </subcellularLocation>
    <subcellularLocation>
        <location evidence="1">Host endosome membrane</location>
        <topology evidence="1">Single-pass type I membrane protein</topology>
    </subcellularLocation>
    <text evidence="1">The surface protein is not anchored to the viral envelope, but associates with the extravirion surface through its binding to TM. It is probably concentrated at the site of budding and incorporated into the virions possibly by contacts between the cytoplasmic tail of Env and the N-terminus of Gag.</text>
</comment>
<comment type="subcellular location">
    <molecule>Transmembrane protein gp41</molecule>
    <subcellularLocation>
        <location evidence="1">Virion membrane</location>
        <topology evidence="1">Single-pass type I membrane protein</topology>
    </subcellularLocation>
    <subcellularLocation>
        <location evidence="1">Host cell membrane</location>
        <topology evidence="1">Single-pass type I membrane protein</topology>
    </subcellularLocation>
    <subcellularLocation>
        <location evidence="1">Host endosome membrane</location>
        <topology evidence="1">Single-pass type I membrane protein</topology>
    </subcellularLocation>
    <text evidence="1">It is probably concentrated at the site of budding and incorporated into the virions possibly by contacts between the cytoplasmic tail of Env and the N-terminus of Gag.</text>
</comment>
<comment type="domain">
    <text evidence="1">Some of the most genetically diverse regions of the viral genome are present in Env. They are called variable regions 1 through 5 (V1 through V5). Coreceptor usage of gp120 is determined mainly by the primary structure of the third variable region (V3) in the outer domain of gp120. The sequence of V3 determines which coreceptor, CCR5 and/or CXCR4 (corresponding to R5/macrophage, X4/T cell and R5X4/T cell and macrophage tropism), is used to trigger the fusion potential of the Env complex, and hence which cells the virus can infect. Binding to CCR5 involves a region adjacent in addition to V3.</text>
</comment>
<comment type="domain">
    <text evidence="1">The membrane proximal external region (MPER) present in gp41 is a tryptophan-rich region recognized by the antibodies 2F5, Z13, and 4E10. MPER seems to play a role in fusion.</text>
</comment>
<comment type="domain">
    <text evidence="1">The 17 amino acids long immunosuppressive region is present in many retroviral envelope proteins. Synthetic peptides derived from this relatively conserved sequence inhibit immune function in vitro and in vivo.</text>
</comment>
<comment type="domain">
    <text evidence="1">The YXXL motif is involved in determining the exact site of viral release at the surface of infected mononuclear cells and promotes endocytosis. YXXL and di-leucine endocytosis motifs interact directly or indirectly with the clathrin adapter complexes, opperate independently, and their activities are not additive.</text>
</comment>
<comment type="domain">
    <text evidence="1">The CD4-binding region is targeted by the antibody b12.</text>
</comment>
<comment type="PTM">
    <text evidence="1">Highly glycosylated by host. The high number of glycan on the protein is reffered to as 'glycan shield' because it contributes to hide protein sequence from adaptive immune system.</text>
</comment>
<comment type="PTM">
    <text evidence="1 5">Palmitoylation of the transmembrane protein and of Env polyprotein (prior to its proteolytic cleavage) is essential for their association with host cell membrane lipid rafts. Palmitoylation is therefore required for envelope trafficking to classical lipid rafts, but not for viral replication.</text>
</comment>
<comment type="PTM">
    <text evidence="1 7 8">Specific enzymatic cleavages in vivo yield mature proteins. Envelope glycoproteins are synthesized as an inactive precursor that is heavily N-glycosylated and processed likely by host cell furin in the Golgi to yield the mature SU and TM proteins. The cleavage site between SU and TM requires the minimal sequence [KR]-X-[KR]-R. About 2 of the 9 disulfide bonds of gp41 are reduced by P4HB/PDI, following binding to CD4 receptor.</text>
</comment>
<comment type="miscellaneous">
    <text evidence="1">Inhibitors targeting HIV-1 viral envelope proteins are used as antiretroviral drugs. Attachment of virions to the cell surface via non-specific interactions and CD4 binding can be blocked by inhibitors that include cyanovirin-N, cyclotriazadisulfonamide analogs, PRO 2000, TNX 355 and PRO 542. In addition, BMS 806 can block CD4-induced conformational changes. Env interactions with the coreceptor molecules can be targeted by CCR5 antagonists including SCH-D, maraviroc (UK 427857) and aplaviroc (GW 873140), and the CXCR4 antagonist AMD 070. Fusion of viral and cellular membranes can be inhibited by peptides such as enfuvirtide and tifuvirtide (T 1249). Resistance to inhibitors associated with mutations in Env are observed. Most of the time, single mutations confer only a modest reduction in drug susceptibility. Combination of several mutations is usually required to develop a high-level drug resistance.</text>
</comment>
<comment type="miscellaneous">
    <text evidence="1">HIV-1 lineages are divided in three main groups, M (for Major), O (for Outlier), and N (for New, or Non-M, Non-O). The vast majority of strains found worldwide belong to the group M. Group O seems to be endemic to and largely confined to Cameroon and neighboring countries in West Central Africa, where these viruses represent a small minority of HIV-1 strains. The group N is represented by a limited number of isolates from Cameroonian persons. The group M is further subdivided in 9 clades or subtypes (A to D, F to H, J and K).</text>
</comment>
<comment type="similarity">
    <text evidence="1">Belongs to the HIV-1 env protein family.</text>
</comment>
<comment type="online information" name="hivdb">
    <link uri="https://hivdb.stanford.edu"/>
    <text>HIV drug resistance database</text>
</comment>
<comment type="online information" name="HIV drug resistance mutations">
    <link uri="https://www.iasusa.org/hiv-drug-resistance/hiv-drug-resistance-mutations/"/>
</comment>
<organismHost>
    <name type="scientific">Homo sapiens</name>
    <name type="common">Human</name>
    <dbReference type="NCBI Taxonomy" id="9606"/>
</organismHost>
<proteinExistence type="evidence at protein level"/>
<feature type="signal peptide" evidence="1">
    <location>
        <begin position="1"/>
        <end position="32"/>
    </location>
</feature>
<feature type="chain" id="PRO_0000239474" description="Envelope glycoprotein gp160" evidence="1">
    <location>
        <begin position="33"/>
        <end position="861"/>
    </location>
</feature>
<feature type="chain" id="PRO_0000038388" description="Surface protein gp120" evidence="1">
    <location>
        <begin position="33"/>
        <end position="516"/>
    </location>
</feature>
<feature type="chain" id="PRO_0000038389" description="Transmembrane protein gp41" evidence="1">
    <location>
        <begin position="517"/>
        <end position="861"/>
    </location>
</feature>
<feature type="topological domain" description="Extracellular" evidence="1">
    <location>
        <begin position="33"/>
        <end position="689"/>
    </location>
</feature>
<feature type="transmembrane region" description="Helical" evidence="1">
    <location>
        <begin position="690"/>
        <end position="710"/>
    </location>
</feature>
<feature type="topological domain" description="Cytoplasmic" evidence="1">
    <location>
        <begin position="711"/>
        <end position="861"/>
    </location>
</feature>
<feature type="region of interest" description="V1" evidence="1">
    <location>
        <begin position="131"/>
        <end position="161"/>
    </location>
</feature>
<feature type="region of interest" description="V2" evidence="1">
    <location>
        <begin position="162"/>
        <end position="201"/>
    </location>
</feature>
<feature type="region of interest" description="V3" evidence="1">
    <location>
        <begin position="301"/>
        <end position="335"/>
    </location>
</feature>
<feature type="region of interest" description="CD4-binding loop" evidence="1">
    <location>
        <begin position="369"/>
        <end position="379"/>
    </location>
</feature>
<feature type="region of interest" description="V4" evidence="1">
    <location>
        <begin position="390"/>
        <end position="423"/>
    </location>
</feature>
<feature type="region of interest" description="V5">
    <location>
        <begin position="466"/>
        <end position="476"/>
    </location>
</feature>
<feature type="region of interest" description="V5" evidence="1">
    <location>
        <begin position="468"/>
        <end position="476"/>
    </location>
</feature>
<feature type="region of interest" description="Fusion peptide" evidence="1">
    <location>
        <begin position="517"/>
        <end position="537"/>
    </location>
</feature>
<feature type="region of interest" description="Immunosuppression" evidence="1">
    <location>
        <begin position="579"/>
        <end position="597"/>
    </location>
</feature>
<feature type="region of interest" description="MPER; binding to GalCer" evidence="1">
    <location>
        <begin position="667"/>
        <end position="688"/>
    </location>
</feature>
<feature type="region of interest" description="Disordered" evidence="2">
    <location>
        <begin position="723"/>
        <end position="747"/>
    </location>
</feature>
<feature type="coiled-coil region" evidence="1">
    <location>
        <begin position="638"/>
        <end position="672"/>
    </location>
</feature>
<feature type="short sequence motif" description="Putative binding site to alpha-4/beta-7 integrin">
    <location>
        <begin position="184"/>
        <end position="186"/>
    </location>
</feature>
<feature type="short sequence motif" description="YXXL motif; contains endocytosis signal" evidence="1">
    <location>
        <begin position="717"/>
        <end position="720"/>
    </location>
</feature>
<feature type="short sequence motif" description="Di-leucine internalization motif" evidence="1">
    <location>
        <begin position="860"/>
        <end position="861"/>
    </location>
</feature>
<feature type="site" description="Cleavage; by host furin" evidence="1">
    <location>
        <begin position="516"/>
        <end position="517"/>
    </location>
</feature>
<feature type="lipid moiety-binding region" description="S-palmitoyl cysteine; by host" evidence="1">
    <location>
        <position position="769"/>
    </location>
</feature>
<feature type="lipid moiety-binding region" description="S-palmitoyl cysteine; by host" evidence="1">
    <location>
        <position position="842"/>
    </location>
</feature>
<feature type="glycosylation site" description="N-linked (GlcNAc...) asparagine; by host" evidence="1">
    <location>
        <position position="88"/>
    </location>
</feature>
<feature type="glycosylation site" description="N-linked (GlcNAc...) asparagine; by host" evidence="1">
    <location>
        <position position="136"/>
    </location>
</feature>
<feature type="glycosylation site" description="N-linked (GlcNAc...) asparagine; by host" evidence="1">
    <location>
        <position position="141"/>
    </location>
</feature>
<feature type="glycosylation site" description="N-linked (GlcNAc...) asparagine; by host" evidence="1">
    <location>
        <position position="146"/>
    </location>
</feature>
<feature type="glycosylation site" description="N-linked (GlcNAc...) asparagine; by host" evidence="1">
    <location>
        <position position="161"/>
    </location>
</feature>
<feature type="glycosylation site" description="N-linked (GlcNAc...) asparagine; by host" evidence="1">
    <location>
        <position position="165"/>
    </location>
</feature>
<feature type="glycosylation site" description="N-linked (GlcNAc...) asparagine; by host" evidence="1">
    <location>
        <position position="191"/>
    </location>
</feature>
<feature type="glycosylation site" description="N-linked (GlcNAc...) asparagine; by host" evidence="1">
    <location>
        <position position="202"/>
    </location>
</feature>
<feature type="glycosylation site" description="N-linked (GlcNAc...) asparagine; by host" evidence="1">
    <location>
        <position position="235"/>
    </location>
</feature>
<feature type="glycosylation site" description="N-linked (GlcNAc...) asparagine; by host" evidence="1">
    <location>
        <position position="239"/>
    </location>
</feature>
<feature type="glycosylation site" description="N-linked (GlcNAc...) asparagine; by host" evidence="1">
    <location>
        <position position="246"/>
    </location>
</feature>
<feature type="glycosylation site" description="N-linked (GlcNAc...) asparagine; by host" evidence="1">
    <location>
        <position position="267"/>
    </location>
</feature>
<feature type="glycosylation site" description="N-linked (GlcNAc...) asparagine; by host" evidence="1">
    <location>
        <position position="281"/>
    </location>
</feature>
<feature type="glycosylation site" description="N-linked (GlcNAc...) asparagine; by host" evidence="1">
    <location>
        <position position="294"/>
    </location>
</feature>
<feature type="glycosylation site" description="N-linked (GlcNAc...) asparagine; by host" evidence="1">
    <location>
        <position position="300"/>
    </location>
</feature>
<feature type="glycosylation site" description="N-linked (GlcNAc...) asparagine; by host" evidence="1">
    <location>
        <position position="306"/>
    </location>
</feature>
<feature type="glycosylation site" description="N-linked (GlcNAc...) asparagine; by host" evidence="1">
    <location>
        <position position="337"/>
    </location>
</feature>
<feature type="glycosylation site" description="N-linked (GlcNAc...) asparagine; by host" evidence="1">
    <location>
        <position position="344"/>
    </location>
</feature>
<feature type="glycosylation site" description="N-linked (GlcNAc...) asparagine; by host" evidence="1">
    <location>
        <position position="361"/>
    </location>
</feature>
<feature type="glycosylation site" description="N-linked (GlcNAc...) asparagine; by host" evidence="1">
    <location>
        <position position="391"/>
    </location>
</feature>
<feature type="glycosylation site" description="N-linked (GlcNAc...) asparagine; by host" evidence="1">
    <location>
        <position position="397"/>
    </location>
</feature>
<feature type="glycosylation site" description="N-linked (GlcNAc...) asparagine; by host" evidence="1">
    <location>
        <position position="402"/>
    </location>
</feature>
<feature type="glycosylation site" description="N-linked (GlcNAc...) asparagine; by host" evidence="1">
    <location>
        <position position="411"/>
    </location>
</feature>
<feature type="glycosylation site" description="N-linked (GlcNAc...) asparagine; by host" evidence="1">
    <location>
        <position position="453"/>
    </location>
</feature>
<feature type="glycosylation site" description="N-linked (GlcNAc...) asparagine; by host" evidence="1">
    <location>
        <position position="468"/>
    </location>
</feature>
<feature type="glycosylation site" description="N-linked (GlcNAc...) asparagine; by host" evidence="1">
    <location>
        <position position="616"/>
    </location>
</feature>
<feature type="glycosylation site" description="N-linked (GlcNAc...) asparagine; by host" evidence="1">
    <location>
        <position position="621"/>
    </location>
</feature>
<feature type="glycosylation site" description="N-linked (GlcNAc...) asparagine; by host" evidence="1">
    <location>
        <position position="630"/>
    </location>
</feature>
<feature type="glycosylation site" description="N-linked (GlcNAc...) asparagine; by host" evidence="1">
    <location>
        <position position="642"/>
    </location>
</feature>
<feature type="glycosylation site" description="N-linked (GlcNAc...) asparagine; by host" evidence="1">
    <location>
        <position position="679"/>
    </location>
</feature>
<feature type="disulfide bond" evidence="1 10">
    <location>
        <begin position="54"/>
        <end position="74"/>
    </location>
</feature>
<feature type="disulfide bond" evidence="1 10">
    <location>
        <begin position="119"/>
        <end position="210"/>
    </location>
</feature>
<feature type="disulfide bond" evidence="1 10">
    <location>
        <begin position="126"/>
        <end position="201"/>
    </location>
</feature>
<feature type="disulfide bond" evidence="1 10">
    <location>
        <begin position="131"/>
        <end position="162"/>
    </location>
</feature>
<feature type="disulfide bond" evidence="1 10">
    <location>
        <begin position="223"/>
        <end position="252"/>
    </location>
</feature>
<feature type="disulfide bond" evidence="1 10">
    <location>
        <begin position="233"/>
        <end position="244"/>
    </location>
</feature>
<feature type="disulfide bond" evidence="1 10">
    <location>
        <begin position="301"/>
        <end position="336"/>
    </location>
</feature>
<feature type="disulfide bond" evidence="1 10">
    <location>
        <begin position="383"/>
        <end position="450"/>
    </location>
</feature>
<feature type="disulfide bond" evidence="1 10">
    <location>
        <begin position="390"/>
        <end position="423"/>
    </location>
</feature>
<feature type="disulfide bond" evidence="1 10">
    <location>
        <begin position="603"/>
        <end position="609"/>
    </location>
</feature>
<feature type="sequence variant" description="In strain: Clone pNL4-3.">
    <original>GNA</original>
    <variation>KND</variation>
    <location>
        <begin position="135"/>
        <end position="137"/>
    </location>
</feature>
<feature type="sequence variant" description="In strain: Clone pNL4-3.">
    <location>
        <begin position="143"/>
        <end position="147"/>
    </location>
</feature>
<feature type="sequence variant" description="In strain: Clone pNL4-3.">
    <original>EMM</original>
    <variation>RMI</variation>
    <location>
        <begin position="151"/>
        <end position="153"/>
    </location>
</feature>
<feature type="sequence variant" description="In strain: Clone pNL4-3.">
    <original>G</original>
    <variation>D</variation>
    <location>
        <position position="172"/>
    </location>
</feature>
<feature type="sequence variant" description="In strain: Clone pNL4-3.">
    <original>I</original>
    <variation>V</variation>
    <location>
        <position position="187"/>
    </location>
</feature>
<feature type="sequence variant" description="In strain: Clone pNL4-3.">
    <location>
        <begin position="192"/>
        <end position="193"/>
    </location>
</feature>
<feature type="sequence variant" description="In strain: Clone pNL4-3.">
    <original>TLT</original>
    <variation>RLI</variation>
    <location>
        <begin position="197"/>
        <end position="199"/>
    </location>
</feature>
<feature type="sequence variant" description="In strain: Clone pNL4-3.">
    <original>E</original>
    <variation>D</variation>
    <location>
        <position position="274"/>
    </location>
</feature>
<feature type="sequence variant" description="In strain: Clone pNL4-3.">
    <original>Q</original>
    <variation>T</variation>
    <location>
        <position position="295"/>
    </location>
</feature>
<feature type="sequence variant" description="In strain: Clone pNL4-3.">
    <original>R</original>
    <variation>A</variation>
    <location>
        <position position="538"/>
    </location>
</feature>
<feature type="sequence variant" description="In strain: Clone pNL4-3.">
    <original>G</original>
    <variation>D</variation>
    <location>
        <position position="552"/>
    </location>
</feature>
<feature type="sequence variant" description="In strain: Clone pNL4-3.">
    <original>I</original>
    <variation>L</variation>
    <location>
        <position position="689"/>
    </location>
</feature>
<feature type="sequence variant" description="In strain: Clone pNL4-3.">
    <original>T</original>
    <variation>I</variation>
    <location>
        <position position="728"/>
    </location>
</feature>
<feature type="sequence variant" description="In strain: Clone pNL4-3.">
    <original>S</original>
    <variation>N</variation>
    <location>
        <position position="818"/>
    </location>
</feature>
<feature type="sequence variant" description="In strain: Clone pNL4-3.">
    <original>VQGAC</original>
    <variation>LQAAY</variation>
    <location>
        <begin position="838"/>
        <end position="842"/>
    </location>
</feature>
<feature type="mutagenesis site" description="Partial loss of CD4-independent binding." evidence="9">
    <original>LD</original>
    <variation>AA</variation>
    <location>
        <begin position="184"/>
        <end position="185"/>
    </location>
</feature>
<feature type="mutagenesis site" description="Almost no effect on virions assembly and infectivity." evidence="5">
    <original>C</original>
    <variation>F</variation>
    <location>
        <position position="769"/>
    </location>
</feature>
<feature type="strand" evidence="11">
    <location>
        <begin position="311"/>
        <end position="314"/>
    </location>
</feature>
<feature type="strand" evidence="11">
    <location>
        <begin position="322"/>
        <end position="325"/>
    </location>
</feature>
<feature type="helix" evidence="13">
    <location>
        <begin position="559"/>
        <end position="594"/>
    </location>
</feature>
<feature type="helix" evidence="14">
    <location>
        <begin position="606"/>
        <end position="614"/>
    </location>
</feature>
<feature type="helix" evidence="13">
    <location>
        <begin position="633"/>
        <end position="655"/>
    </location>
</feature>
<feature type="helix" evidence="12">
    <location>
        <begin position="668"/>
        <end position="689"/>
    </location>
</feature>
<protein>
    <recommendedName>
        <fullName evidence="1">Envelope glycoprotein gp160</fullName>
    </recommendedName>
    <alternativeName>
        <fullName evidence="1">Env polyprotein</fullName>
    </alternativeName>
    <component>
        <recommendedName>
            <fullName evidence="1">Surface protein gp120</fullName>
            <shortName evidence="1">SU</shortName>
        </recommendedName>
        <alternativeName>
            <fullName evidence="1">Glycoprotein 120</fullName>
            <shortName evidence="1">gp120</shortName>
        </alternativeName>
    </component>
    <component>
        <recommendedName>
            <fullName evidence="1">Transmembrane protein gp41</fullName>
            <shortName evidence="1">TM</shortName>
        </recommendedName>
        <alternativeName>
            <fullName evidence="1">Glycoprotein 41</fullName>
            <shortName evidence="1">gp41</shortName>
        </alternativeName>
    </component>
</protein>
<name>ENV_HV1BR</name>
<reference key="1">
    <citation type="journal article" date="1985" name="Cell">
        <title>Nucleotide sequence of the AIDS virus, LAV.</title>
        <authorList>
            <person name="Wain-Hobson S."/>
            <person name="Sonigo P."/>
            <person name="Danos O."/>
            <person name="Cole S."/>
            <person name="Alizon M."/>
        </authorList>
    </citation>
    <scope>NUCLEOTIDE SEQUENCE [GENOMIC RNA]</scope>
</reference>
<reference key="2">
    <citation type="submission" date="1989-07" db="EMBL/GenBank/DDBJ databases">
        <authorList>
            <person name="Buckler C.E."/>
        </authorList>
    </citation>
    <scope>NUCLEOTIDE SEQUENCE [GENOMIC RNA]</scope>
    <source>
        <strain>Clone pNL4-3</strain>
    </source>
</reference>
<reference key="3">
    <citation type="submission" date="2010-05" db="EMBL/GenBank/DDBJ databases">
        <authorList>
            <person name="Strebel K.J."/>
            <person name="Martin M.A."/>
        </authorList>
    </citation>
    <scope>SEQUENCE REVISION TO 537 AND 538</scope>
</reference>
<reference key="4">
    <citation type="journal article" date="1992" name="Proc. Natl. Acad. Sci. U.S.A.">
        <title>Sequence and expression of a membrane-associated C-type lectin that exhibits CD4-independent binding of human immunodeficiency virus envelope glycoprotein gp 120.</title>
        <authorList>
            <person name="Curtis B.M."/>
            <person name="Scharnowske S."/>
            <person name="Watson A.J."/>
        </authorList>
    </citation>
    <scope>INTERACTION OF SURFACE PROTEIN GP120 WITH HUMAN CD209/DC-SIGN</scope>
</reference>
<reference key="5">
    <citation type="journal article" date="2001" name="J. Virol.">
        <title>DC-SIGN interactions with human immunodeficiency virus type 1 and 2 and simian immunodeficiency virus.</title>
        <authorList>
            <person name="Pohlmann S."/>
            <person name="Baribaud F."/>
            <person name="Lee B."/>
            <person name="Leslie G.J."/>
            <person name="Sanchez M.D."/>
            <person name="Hiebenthal-Millow K."/>
            <person name="Munch J."/>
            <person name="Kirchhoff F."/>
            <person name="Doms R.W."/>
        </authorList>
    </citation>
    <scope>INTERACTION OF SURFACE PROTEIN GP120 WITH HOST CD209/DC-SIGN</scope>
    <source>
        <strain>Clone pNL4-3</strain>
    </source>
</reference>
<reference key="6">
    <citation type="journal article" date="2002" name="Immunity">
        <title>DC-SIGN-mediated internalization of HIV is required for trans-enhancement of T cell infection.</title>
        <authorList>
            <person name="Kwon D.S."/>
            <person name="Gregorio G."/>
            <person name="Bitton N."/>
            <person name="Hendrickson W.A."/>
            <person name="Littman D.R."/>
        </authorList>
    </citation>
    <scope>INTERACTION OF SURFACE PROTEIN GP120 WITH HUMAN CD209/DC-SIGN</scope>
    <source>
        <strain>Clone pNL4-3</strain>
    </source>
</reference>
<reference key="7">
    <citation type="journal article" date="2002" name="J. Biol. Chem.">
        <title>Inhibitors of protein-disulfide isomerase prevent cleavage of disulfide bonds in receptor-bound glycoprotein 120 and prevent HIV-1 entry.</title>
        <authorList>
            <person name="Gallina A."/>
            <person name="Hanley T.M."/>
            <person name="Mandel R."/>
            <person name="Trahey M."/>
            <person name="Broder C.C."/>
            <person name="Viglianti G.A."/>
            <person name="Ryser H.J."/>
        </authorList>
    </citation>
    <scope>REDUCTION OF SURFACE PROTEIN GP120 DISULFIDE BONDS BY P4HB/PDI</scope>
</reference>
<reference key="8">
    <citation type="journal article" date="2004" name="J. Biol. Chem.">
        <title>Polyarginine inhibits gp160 processing by furin and suppresses productive human immunodeficiency virus type 1 infection.</title>
        <authorList>
            <person name="Kibler K.V."/>
            <person name="Miyazato A."/>
            <person name="Yedavalli V.S.R.K."/>
            <person name="Dayton A.I."/>
            <person name="Jacobs B.L."/>
            <person name="Dapolito G."/>
            <person name="Kim S.-J."/>
            <person name="Jeang K.-T."/>
        </authorList>
    </citation>
    <scope>PROTEOLYTIC PROCESSING OF POLYPROTEIN BY HOST FURIN</scope>
    <source>
        <strain>Clone pNL4-3</strain>
    </source>
</reference>
<reference key="9">
    <citation type="journal article" date="2004" name="J. Virol.">
        <title>Human immunodeficiency virus type 1 envelope glycoproteins that lack cytoplasmic domain cysteines: impact on association with membrane lipid rafts and incorporation onto budding virus particles.</title>
        <authorList>
            <person name="Bhattacharya J."/>
            <person name="Peters P.J."/>
            <person name="Clapham P.R."/>
        </authorList>
    </citation>
    <scope>ROLE OF PALMITOYLATION</scope>
    <scope>MUTAGENESIS OF CYS-769</scope>
    <source>
        <strain>Clone pNL4-3</strain>
    </source>
</reference>
<reference key="10">
    <citation type="journal article" date="2006" name="Virology">
        <title>Role of protein disulfide isomerase and other thiol-reactive proteins in HIV-1 envelope protein-mediated fusion.</title>
        <authorList>
            <person name="Ou W."/>
            <person name="Silver J."/>
        </authorList>
    </citation>
    <scope>REDUCTION OF SURFACE PROTEIN GP120 DISULFIDE BONDS BY HUMAN TXN</scope>
    <source>
        <strain>Clone pNL4-3</strain>
    </source>
</reference>
<reference key="11">
    <citation type="journal article" date="2008" name="Mol. Biol. Cell">
        <title>Only five of 10 strictly conserved disulfide bonds are essential for folding and eight for function of the HIV-1 envelope glycoprotein.</title>
        <authorList>
            <person name="van Anken E."/>
            <person name="Sanders R.W."/>
            <person name="Liscaljet I.M."/>
            <person name="Land A."/>
            <person name="Bontjer I."/>
            <person name="Tillemans S."/>
            <person name="Nabatov A.A."/>
            <person name="Paxton W.A."/>
            <person name="Berkhout B."/>
            <person name="Braakman I."/>
        </authorList>
    </citation>
    <scope>DISULFIDE BONDS</scope>
</reference>
<reference key="12">
    <citation type="journal article" date="2008" name="Nat. Immunol.">
        <title>HIV-1 envelope protein binds to and signals through integrin alpha4beta7, the gut mucosal homing receptor for peripheral T cells.</title>
        <authorList>
            <person name="Arthos J."/>
            <person name="Cicala C."/>
            <person name="Martinelli E."/>
            <person name="Macleod K."/>
            <person name="Van Ryk D."/>
            <person name="Wei D."/>
            <person name="Xiao Z."/>
            <person name="Veenstra T.D."/>
            <person name="Conrad T.P."/>
            <person name="Lempicki R.A."/>
            <person name="McLaughlin S."/>
            <person name="Pascuccio M."/>
            <person name="Gopaul R."/>
            <person name="McNally J."/>
            <person name="Cruz C.C."/>
            <person name="Censoplano N."/>
            <person name="Chung E."/>
            <person name="Reitano K.N."/>
            <person name="Kottilil S."/>
            <person name="Goode D.J."/>
            <person name="Fauci A.S."/>
        </authorList>
    </citation>
    <scope>INTERACTION OF GP120 WITH HUMAN ITGA4/ITGB7 HETERODIMER</scope>
    <scope>MUTAGENESIS OF 184-LEU-ASP-185</scope>
    <source>
        <strain>Clone pNL4-3</strain>
    </source>
</reference>
<reference key="13">
    <citation type="journal article" date="2003" name="APMIS">
        <title>Pathogens target DC-SIGN to influence their fate DC-SIGN functions as a pathogen receptor with broad specificity.</title>
        <authorList>
            <person name="Geijtenbeek T.B."/>
            <person name="van Kooyk Y."/>
        </authorList>
    </citation>
    <scope>REVIEW</scope>
</reference>
<reference key="14">
    <citation type="journal article" date="2003" name="Biochim. Biophys. Acta">
        <title>The HIV Env-mediated fusion reaction.</title>
        <authorList>
            <person name="Gallo S.A."/>
            <person name="Finnegan C.M."/>
            <person name="Viard M."/>
            <person name="Raviv Y."/>
            <person name="Dimitrov A."/>
            <person name="Rawat S.S."/>
            <person name="Puri A."/>
            <person name="Durell S."/>
            <person name="Blumenthal R."/>
        </authorList>
    </citation>
    <scope>REVIEW</scope>
</reference>
<reference key="15">
    <citation type="journal article" date="2005" name="Cell Death Differ.">
        <title>Mechanisms of apoptosis induction by the HIV-1 envelope.</title>
        <authorList>
            <person name="Perfettini J.-L."/>
            <person name="Castedo M."/>
            <person name="Roumier T."/>
            <person name="Andreau K."/>
            <person name="Nardacci R."/>
            <person name="Piacentini M."/>
            <person name="Kroemer G."/>
        </authorList>
    </citation>
    <scope>REVIEW</scope>
</reference>
<reference key="16">
    <citation type="journal article" date="2005" name="AIDS Res. Hum. Retroviruses">
        <title>V3: HIV's switch-hitter.</title>
        <authorList>
            <person name="Hartley O."/>
            <person name="Klasse P.J."/>
            <person name="Sattentau Q.J."/>
            <person name="Moore J.P."/>
        </authorList>
    </citation>
    <scope>REVIEW</scope>
</reference>
<reference key="17">
    <citation type="journal article" date="2005" name="Drugs">
        <title>Emerging drug targets for antiretroviral therapy.</title>
        <authorList>
            <person name="Reeves J.D."/>
            <person name="Piefer A.J."/>
        </authorList>
    </citation>
    <scope>REVIEW</scope>
</reference>
<reference key="18">
    <citation type="journal article" date="2006" name="EMBO J.">
        <title>HIV and the chemokine system: 10 years later.</title>
        <authorList>
            <person name="Lusso P."/>
        </authorList>
    </citation>
    <scope>REVIEW</scope>
</reference>
<reference key="19">
    <citation type="journal article" date="2000" name="Bioorg. Med. Chem.">
        <title>The structure of an HIV-1 specific cell entry inhibitor in complex with the HIV-1 gp41 trimeric core.</title>
        <authorList>
            <person name="Zhou G."/>
            <person name="Ferrer M."/>
            <person name="Chopra R."/>
            <person name="Kapoor T.M."/>
            <person name="Strassmaier T."/>
            <person name="Weissenhorn W."/>
            <person name="Skehel J.J."/>
            <person name="Oprian D."/>
            <person name="Schreiber S.L."/>
            <person name="Harrison S.C."/>
            <person name="Wiley D.C."/>
        </authorList>
    </citation>
    <scope>X-RAY CRYSTALLOGRAPHY (3.0 ANGSTROMS) OF 537-670</scope>
</reference>
<reference key="20">
    <citation type="journal article" date="2002" name="Biochim. Biophys. Acta">
        <title>Conformational mapping of the N-terminal peptide of HIV-1 gp41 in membrane environments using (13)C-enhanced Fourier transform infrared spectroscopy.</title>
        <authorList>
            <person name="Gordon L.M."/>
            <person name="Mobley P.W."/>
            <person name="Pilpa R."/>
            <person name="Sherman M.A."/>
            <person name="Waring A.J."/>
        </authorList>
    </citation>
    <scope>STRUCTURE BY FTIR OF 517-539</scope>
</reference>
<reference key="21">
    <citation type="journal article" date="2004" name="Protein Sci.">
        <title>Conformational mapping of the N-terminal peptide of HIV-1 gp41 in lipid detergent and aqueous environments using 13C-enhanced Fourier transform infrared spectroscopy.</title>
        <authorList>
            <person name="Gordon L.M."/>
            <person name="Mobley P.W."/>
            <person name="Lee W."/>
            <person name="Eskandari S."/>
            <person name="Kaznessis Y.N."/>
            <person name="Sherman M.A."/>
            <person name="Waring A.J."/>
        </authorList>
    </citation>
    <scope>STRUCTURE BY FTIR OF 517-539</scope>
</reference>
<gene>
    <name evidence="1" type="primary">env</name>
</gene>
<sequence>MRVKEKYQHLWRWGWKWGTMLLGILMICSATEKLWVTVYYGVPVWKEATTTLFCASDAKAYDTEVHNVWATHACVPTDPNPQEVVLVNVTENFNMWKNDMVEQMHEDIISLWDQSLKPCVKLTPLCVSLKCTDLGNATNTNSSNTNSSSGEMMMEKGEIKNCSFNISTSIRGKVQKEYAFFYKLDIIPIDNDTTSYTLTSCNTSVITQACPKVSFEPIPIHYCAPAGFAILKCNNKTFNGTGPCTNVSTVQCTHGIRPVVSTQLLLNGSLAEEEVVIRSANFTDNAKTIIVQLNQSVEINCTRPNNNTRKSIRIQRGPGRAFVTIGKIGNMRQAHCNISRAKWNATLKQIASKLREQFGNNKTIIFKQSSGGDPEIVTHSFNCGGEFFYCNSTQLFNSTWFNSTWSTEGSNNTEGSDTITLPCRIKQFINMWQEVGKAMYAPPISGQIRCSSNITGLLLTRDGGNNNNGSEIFRPGGGDMRDNWRSELYKYKVVKIEPLGVAPTKAKRRVVQREKRAVGIGALFLGFLGAAGSTMGARSMTLTVQARQLLSGIVQQQNNLLRAIEAQQHLLQLTVWGIKQLQARILAVERYLKDQQLLGIWGCSGKLICTTAVPWNASWSNKSLEQIWNNMTWMEWDREINNYTSLIHSLIEESQNQQEKNEQELLELDKWASLWNWFNITNWLWYIKIFIMIVGGLVGLRIVFAVLSIVNRVRQGYSPLSFQTHLPTPRGPDRPEGIEEEGGERDRDRSIRLVNGSLALIWDDLRSLCLFSYHRLRDLLLIVTRIVELLGRRGWEALKYWWNLLQYWSQELKNSAVSLLNATAIAVAEGTDRVIEVVQGACRAIRHIPRRIRQGLERILL</sequence>
<organism>
    <name type="scientific">Human immunodeficiency virus type 1 group M subtype B (isolate BRU/LAI)</name>
    <name type="common">HIV-1</name>
    <dbReference type="NCBI Taxonomy" id="11686"/>
    <lineage>
        <taxon>Viruses</taxon>
        <taxon>Riboviria</taxon>
        <taxon>Pararnavirae</taxon>
        <taxon>Artverviricota</taxon>
        <taxon>Revtraviricetes</taxon>
        <taxon>Ortervirales</taxon>
        <taxon>Retroviridae</taxon>
        <taxon>Orthoretrovirinae</taxon>
        <taxon>Lentivirus</taxon>
        <taxon>Human immunodeficiency virus type 1</taxon>
    </lineage>
</organism>
<dbReference type="EMBL" id="K02013">
    <property type="protein sequence ID" value="AAB59751.1"/>
    <property type="molecule type" value="Genomic_RNA"/>
</dbReference>
<dbReference type="EMBL" id="A04321">
    <property type="protein sequence ID" value="CAA00352.1"/>
    <property type="molecule type" value="Unassigned_RNA"/>
</dbReference>
<dbReference type="EMBL" id="M19921">
    <property type="protein sequence ID" value="AAA44992.2"/>
    <property type="molecule type" value="Genomic_RNA"/>
</dbReference>
<dbReference type="PIR" id="A03975">
    <property type="entry name" value="VCLJLV"/>
</dbReference>
<dbReference type="PDB" id="1ENV">
    <property type="method" value="X-ray"/>
    <property type="resolution" value="2.60 A"/>
    <property type="chains" value="A=546-593, A=633-670"/>
</dbReference>
<dbReference type="PDB" id="1ERF">
    <property type="method" value="IR"/>
    <property type="chains" value="A=517-539"/>
</dbReference>
<dbReference type="PDB" id="1FAV">
    <property type="method" value="X-ray"/>
    <property type="resolution" value="3.00 A"/>
    <property type="chains" value="A=546-595, C=639-670"/>
</dbReference>
<dbReference type="PDB" id="1JD8">
    <property type="method" value="NMR"/>
    <property type="chains" value="A=600-612"/>
</dbReference>
<dbReference type="PDB" id="1P5A">
    <property type="method" value="IR"/>
    <property type="chains" value="A=517-539"/>
</dbReference>
<dbReference type="PDB" id="1U6U">
    <property type="method" value="NMR"/>
    <property type="chains" value="A=310-326"/>
</dbReference>
<dbReference type="PDB" id="1U6V">
    <property type="method" value="NMR"/>
    <property type="chains" value="A=310-326"/>
</dbReference>
<dbReference type="PDB" id="2ZZO">
    <property type="method" value="X-ray"/>
    <property type="resolution" value="2.20 A"/>
    <property type="chains" value="C=633-666, N=551-586"/>
</dbReference>
<dbReference type="PDB" id="3G9R">
    <property type="method" value="X-ray"/>
    <property type="resolution" value="2.00 A"/>
    <property type="chains" value="A/B/C/D/E/F=667-689"/>
</dbReference>
<dbReference type="PDB" id="3MNW">
    <property type="method" value="X-ray"/>
    <property type="resolution" value="2.20 A"/>
    <property type="chains" value="P=657-676"/>
</dbReference>
<dbReference type="PDB" id="3VGX">
    <property type="method" value="X-ray"/>
    <property type="resolution" value="1.74 A"/>
    <property type="chains" value="C=558-595, D=626-657"/>
</dbReference>
<dbReference type="PDB" id="3VTP">
    <property type="method" value="X-ray"/>
    <property type="resolution" value="1.90 A"/>
    <property type="chains" value="C=555-595, D=631-666"/>
</dbReference>
<dbReference type="PDB" id="5WES">
    <property type="method" value="X-ray"/>
    <property type="resolution" value="2.71 A"/>
    <property type="chains" value="P=316-320"/>
</dbReference>
<dbReference type="PDB" id="5WET">
    <property type="method" value="X-ray"/>
    <property type="resolution" value="2.64 A"/>
    <property type="chains" value="P=316-321"/>
</dbReference>
<dbReference type="PDB" id="5WEU">
    <property type="method" value="X-ray"/>
    <property type="resolution" value="1.58 A"/>
    <property type="chains" value="P=316-325"/>
</dbReference>
<dbReference type="PDB" id="6R2G">
    <property type="method" value="X-ray"/>
    <property type="resolution" value="1.90 A"/>
    <property type="chains" value="C=632-666"/>
</dbReference>
<dbReference type="PDBsum" id="1ENV"/>
<dbReference type="PDBsum" id="1ERF"/>
<dbReference type="PDBsum" id="1FAV"/>
<dbReference type="PDBsum" id="1JD8"/>
<dbReference type="PDBsum" id="1P5A"/>
<dbReference type="PDBsum" id="1U6U"/>
<dbReference type="PDBsum" id="1U6V"/>
<dbReference type="PDBsum" id="2ZZO"/>
<dbReference type="PDBsum" id="3G9R"/>
<dbReference type="PDBsum" id="3MNW"/>
<dbReference type="PDBsum" id="3VGX"/>
<dbReference type="PDBsum" id="3VTP"/>
<dbReference type="PDBsum" id="5WES"/>
<dbReference type="PDBsum" id="5WET"/>
<dbReference type="PDBsum" id="5WEU"/>
<dbReference type="PDBsum" id="6R2G"/>
<dbReference type="BMRB" id="P03377"/>
<dbReference type="SMR" id="P03377"/>
<dbReference type="IntAct" id="P03377">
    <property type="interactions" value="1"/>
</dbReference>
<dbReference type="BindingDB" id="P03377"/>
<dbReference type="ChEMBL" id="CHEMBL5826"/>
<dbReference type="GlyCosmos" id="P03377">
    <property type="glycosylation" value="30 sites, No reported glycans"/>
</dbReference>
<dbReference type="ABCD" id="P03377">
    <property type="antibodies" value="62 sequenced antibodies"/>
</dbReference>
<dbReference type="Reactome" id="R-HSA-5621480">
    <property type="pathway name" value="Dectin-2 family"/>
</dbReference>
<dbReference type="EvolutionaryTrace" id="P03377"/>
<dbReference type="Proteomes" id="UP000007692">
    <property type="component" value="Genome"/>
</dbReference>
<dbReference type="GO" id="GO:0044175">
    <property type="term" value="C:host cell endosome membrane"/>
    <property type="evidence" value="ECO:0007669"/>
    <property type="project" value="UniProtKB-SubCell"/>
</dbReference>
<dbReference type="GO" id="GO:0020002">
    <property type="term" value="C:host cell plasma membrane"/>
    <property type="evidence" value="ECO:0007669"/>
    <property type="project" value="UniProtKB-SubCell"/>
</dbReference>
<dbReference type="GO" id="GO:0016020">
    <property type="term" value="C:membrane"/>
    <property type="evidence" value="ECO:0007669"/>
    <property type="project" value="UniProtKB-UniRule"/>
</dbReference>
<dbReference type="GO" id="GO:0019031">
    <property type="term" value="C:viral envelope"/>
    <property type="evidence" value="ECO:0007669"/>
    <property type="project" value="UniProtKB-KW"/>
</dbReference>
<dbReference type="GO" id="GO:0055036">
    <property type="term" value="C:virion membrane"/>
    <property type="evidence" value="ECO:0007669"/>
    <property type="project" value="UniProtKB-SubCell"/>
</dbReference>
<dbReference type="GO" id="GO:0005198">
    <property type="term" value="F:structural molecule activity"/>
    <property type="evidence" value="ECO:0007669"/>
    <property type="project" value="UniProtKB-UniRule"/>
</dbReference>
<dbReference type="GO" id="GO:0075512">
    <property type="term" value="P:clathrin-dependent endocytosis of virus by host cell"/>
    <property type="evidence" value="ECO:0007669"/>
    <property type="project" value="UniProtKB-UniRule"/>
</dbReference>
<dbReference type="GO" id="GO:0039654">
    <property type="term" value="P:fusion of virus membrane with host endosome membrane"/>
    <property type="evidence" value="ECO:0007669"/>
    <property type="project" value="UniProtKB-UniRule"/>
</dbReference>
<dbReference type="GO" id="GO:0019064">
    <property type="term" value="P:fusion of virus membrane with host plasma membrane"/>
    <property type="evidence" value="ECO:0007669"/>
    <property type="project" value="UniProtKB-UniRule"/>
</dbReference>
<dbReference type="GO" id="GO:1903908">
    <property type="term" value="P:positive regulation of plasma membrane raft polarization"/>
    <property type="evidence" value="ECO:0007669"/>
    <property type="project" value="UniProtKB-UniRule"/>
</dbReference>
<dbReference type="GO" id="GO:1903911">
    <property type="term" value="P:positive regulation of receptor clustering"/>
    <property type="evidence" value="ECO:0007669"/>
    <property type="project" value="UniProtKB-UniRule"/>
</dbReference>
<dbReference type="GO" id="GO:0019082">
    <property type="term" value="P:viral protein processing"/>
    <property type="evidence" value="ECO:0007669"/>
    <property type="project" value="UniProtKB-UniRule"/>
</dbReference>
<dbReference type="GO" id="GO:0019062">
    <property type="term" value="P:virion attachment to host cell"/>
    <property type="evidence" value="ECO:0007669"/>
    <property type="project" value="UniProtKB-UniRule"/>
</dbReference>
<dbReference type="CDD" id="cd09909">
    <property type="entry name" value="HIV-1-like_HR1-HR2"/>
    <property type="match status" value="1"/>
</dbReference>
<dbReference type="FunFam" id="1.10.287.210:FF:000001">
    <property type="entry name" value="Envelope glycoprotein gp160"/>
    <property type="match status" value="1"/>
</dbReference>
<dbReference type="FunFam" id="1.20.5.490:FF:000001">
    <property type="entry name" value="Envelope glycoprotein gp160"/>
    <property type="match status" value="1"/>
</dbReference>
<dbReference type="FunFam" id="2.170.40.20:FF:000001">
    <property type="entry name" value="Envelope glycoprotein gp160"/>
    <property type="match status" value="1"/>
</dbReference>
<dbReference type="FunFam" id="2.170.40.20:FF:000003">
    <property type="entry name" value="Envelope glycoprotein gp160"/>
    <property type="match status" value="1"/>
</dbReference>
<dbReference type="Gene3D" id="1.10.287.210">
    <property type="match status" value="1"/>
</dbReference>
<dbReference type="Gene3D" id="2.170.40.20">
    <property type="entry name" value="Human immunodeficiency virus 1, Gp160, envelope glycoprotein"/>
    <property type="match status" value="2"/>
</dbReference>
<dbReference type="Gene3D" id="1.20.5.490">
    <property type="entry name" value="Single helix bin"/>
    <property type="match status" value="1"/>
</dbReference>
<dbReference type="HAMAP" id="MF_04083">
    <property type="entry name" value="HIV_ENV"/>
    <property type="match status" value="1"/>
</dbReference>
<dbReference type="InterPro" id="IPR036377">
    <property type="entry name" value="Gp120_core_sf"/>
</dbReference>
<dbReference type="InterPro" id="IPR037527">
    <property type="entry name" value="Gp160"/>
</dbReference>
<dbReference type="InterPro" id="IPR000328">
    <property type="entry name" value="GP41-like"/>
</dbReference>
<dbReference type="InterPro" id="IPR000777">
    <property type="entry name" value="HIV1_Gp120"/>
</dbReference>
<dbReference type="Pfam" id="PF00516">
    <property type="entry name" value="GP120"/>
    <property type="match status" value="1"/>
</dbReference>
<dbReference type="Pfam" id="PF00517">
    <property type="entry name" value="GP41"/>
    <property type="match status" value="1"/>
</dbReference>
<dbReference type="SUPFAM" id="SSF56502">
    <property type="entry name" value="gp120 core"/>
    <property type="match status" value="1"/>
</dbReference>
<dbReference type="SUPFAM" id="SSF58069">
    <property type="entry name" value="Virus ectodomain"/>
    <property type="match status" value="1"/>
</dbReference>
<keyword id="KW-0002">3D-structure</keyword>
<keyword id="KW-0014">AIDS</keyword>
<keyword id="KW-0053">Apoptosis</keyword>
<keyword id="KW-1165">Clathrin-mediated endocytosis of virus by host</keyword>
<keyword id="KW-0165">Cleavage on pair of basic residues</keyword>
<keyword id="KW-0175">Coiled coil</keyword>
<keyword id="KW-1015">Disulfide bond</keyword>
<keyword id="KW-1170">Fusion of virus membrane with host endosomal membrane</keyword>
<keyword id="KW-1168">Fusion of virus membrane with host membrane</keyword>
<keyword id="KW-0325">Glycoprotein</keyword>
<keyword id="KW-1032">Host cell membrane</keyword>
<keyword id="KW-1039">Host endosome</keyword>
<keyword id="KW-1043">Host membrane</keyword>
<keyword id="KW-0945">Host-virus interaction</keyword>
<keyword id="KW-0449">Lipoprotein</keyword>
<keyword id="KW-0472">Membrane</keyword>
<keyword id="KW-0564">Palmitate</keyword>
<keyword id="KW-1185">Reference proteome</keyword>
<keyword id="KW-0732">Signal</keyword>
<keyword id="KW-0812">Transmembrane</keyword>
<keyword id="KW-1133">Transmembrane helix</keyword>
<keyword id="KW-1161">Viral attachment to host cell</keyword>
<keyword id="KW-0261">Viral envelope protein</keyword>
<keyword id="KW-0899">Viral immunoevasion</keyword>
<keyword id="KW-1162">Viral penetration into host cytoplasm</keyword>
<keyword id="KW-0946">Virion</keyword>
<keyword id="KW-1164">Virus endocytosis by host</keyword>
<keyword id="KW-1160">Virus entry into host cell</keyword>
<evidence type="ECO:0000255" key="1">
    <source>
        <dbReference type="HAMAP-Rule" id="MF_04083"/>
    </source>
</evidence>
<evidence type="ECO:0000256" key="2">
    <source>
        <dbReference type="SAM" id="MobiDB-lite"/>
    </source>
</evidence>
<evidence type="ECO:0000269" key="3">
    <source>
    </source>
</evidence>
<evidence type="ECO:0000269" key="4">
    <source>
    </source>
</evidence>
<evidence type="ECO:0000269" key="5">
    <source>
    </source>
</evidence>
<evidence type="ECO:0000269" key="6">
    <source>
    </source>
</evidence>
<evidence type="ECO:0000269" key="7">
    <source>
    </source>
</evidence>
<evidence type="ECO:0000269" key="8">
    <source>
    </source>
</evidence>
<evidence type="ECO:0000269" key="9">
    <source>
    </source>
</evidence>
<evidence type="ECO:0000269" key="10">
    <source>
    </source>
</evidence>
<evidence type="ECO:0007829" key="11">
    <source>
        <dbReference type="PDB" id="1U6U"/>
    </source>
</evidence>
<evidence type="ECO:0007829" key="12">
    <source>
        <dbReference type="PDB" id="3G9R"/>
    </source>
</evidence>
<evidence type="ECO:0007829" key="13">
    <source>
        <dbReference type="PDB" id="3VGX"/>
    </source>
</evidence>
<evidence type="ECO:0007829" key="14">
    <source>
        <dbReference type="PDB" id="6R2G"/>
    </source>
</evidence>
<accession>P03377</accession>
<accession>Q85582</accession>